<protein>
    <recommendedName>
        <fullName>SET domain-containing protein SNOG_11806</fullName>
        <ecNumber>2.1.1.-</ecNumber>
    </recommendedName>
</protein>
<evidence type="ECO:0000255" key="1">
    <source>
        <dbReference type="PROSITE-ProRule" id="PRU00190"/>
    </source>
</evidence>
<evidence type="ECO:0000256" key="2">
    <source>
        <dbReference type="SAM" id="MobiDB-lite"/>
    </source>
</evidence>
<evidence type="ECO:0000305" key="3"/>
<feature type="chain" id="PRO_0000413957" description="SET domain-containing protein SNOG_11806">
    <location>
        <begin position="1"/>
        <end position="605"/>
    </location>
</feature>
<feature type="domain" description="SET" evidence="1">
    <location>
        <begin position="473"/>
        <end position="579"/>
    </location>
</feature>
<feature type="region of interest" description="Disordered" evidence="2">
    <location>
        <begin position="68"/>
        <end position="132"/>
    </location>
</feature>
<feature type="compositionally biased region" description="Polar residues" evidence="2">
    <location>
        <begin position="75"/>
        <end position="89"/>
    </location>
</feature>
<feature type="compositionally biased region" description="Acidic residues" evidence="2">
    <location>
        <begin position="104"/>
        <end position="115"/>
    </location>
</feature>
<gene>
    <name type="ORF">SNOG_11806</name>
</gene>
<name>Y1806_PHANO</name>
<proteinExistence type="inferred from homology"/>
<dbReference type="EC" id="2.1.1.-"/>
<dbReference type="EMBL" id="CH445344">
    <property type="protein sequence ID" value="EAT80850.2"/>
    <property type="status" value="ALT_SEQ"/>
    <property type="molecule type" value="Genomic_DNA"/>
</dbReference>
<dbReference type="RefSeq" id="XP_001802043.1">
    <property type="nucleotide sequence ID" value="XM_001801991.1"/>
</dbReference>
<dbReference type="SMR" id="P0CY36"/>
<dbReference type="STRING" id="321614.P0CY36"/>
<dbReference type="GeneID" id="5978951"/>
<dbReference type="KEGG" id="pno:SNOG_11806"/>
<dbReference type="VEuPathDB" id="FungiDB:JI435_118060"/>
<dbReference type="eggNOG" id="KOG0340">
    <property type="taxonomic scope" value="Eukaryota"/>
</dbReference>
<dbReference type="eggNOG" id="KOG1082">
    <property type="taxonomic scope" value="Eukaryota"/>
</dbReference>
<dbReference type="InParanoid" id="P0CY36"/>
<dbReference type="OMA" id="IWRQLHS"/>
<dbReference type="Proteomes" id="UP000001055">
    <property type="component" value="Unassembled WGS sequence"/>
</dbReference>
<dbReference type="GO" id="GO:0000785">
    <property type="term" value="C:chromatin"/>
    <property type="evidence" value="ECO:0000318"/>
    <property type="project" value="GO_Central"/>
</dbReference>
<dbReference type="GO" id="GO:0140938">
    <property type="term" value="F:histone H3 methyltransferase activity"/>
    <property type="evidence" value="ECO:0000318"/>
    <property type="project" value="GO_Central"/>
</dbReference>
<dbReference type="GO" id="GO:0032259">
    <property type="term" value="P:methylation"/>
    <property type="evidence" value="ECO:0007669"/>
    <property type="project" value="UniProtKB-KW"/>
</dbReference>
<dbReference type="Gene3D" id="2.170.270.10">
    <property type="entry name" value="SET domain"/>
    <property type="match status" value="1"/>
</dbReference>
<dbReference type="InterPro" id="IPR053105">
    <property type="entry name" value="Class_V-like_SAM-MTase"/>
</dbReference>
<dbReference type="InterPro" id="IPR001214">
    <property type="entry name" value="SET_dom"/>
</dbReference>
<dbReference type="InterPro" id="IPR046341">
    <property type="entry name" value="SET_dom_sf"/>
</dbReference>
<dbReference type="PANTHER" id="PTHR47250">
    <property type="entry name" value="HISTONE-LYSINE N-METHYLTRANSFERASE SET-6"/>
    <property type="match status" value="1"/>
</dbReference>
<dbReference type="PANTHER" id="PTHR47250:SF3">
    <property type="entry name" value="HISTONE-LYSINE N-METHYLTRANSFERASE SET-6"/>
    <property type="match status" value="1"/>
</dbReference>
<dbReference type="Pfam" id="PF00856">
    <property type="entry name" value="SET"/>
    <property type="match status" value="1"/>
</dbReference>
<dbReference type="SMART" id="SM00317">
    <property type="entry name" value="SET"/>
    <property type="match status" value="1"/>
</dbReference>
<dbReference type="SUPFAM" id="SSF82199">
    <property type="entry name" value="SET domain"/>
    <property type="match status" value="1"/>
</dbReference>
<dbReference type="PROSITE" id="PS50280">
    <property type="entry name" value="SET"/>
    <property type="match status" value="1"/>
</dbReference>
<comment type="similarity">
    <text evidence="1">Belongs to the class V-like SAM-binding methyltransferase superfamily.</text>
</comment>
<comment type="sequence caution" evidence="3">
    <conflict type="erroneous gene model prediction">
        <sequence resource="EMBL-CDS" id="EAT80850"/>
    </conflict>
    <text>The predicted gene SNOG_11806 has been split into 2 genes: SNOG_11805 and SNOG_11806.</text>
</comment>
<organism>
    <name type="scientific">Phaeosphaeria nodorum (strain SN15 / ATCC MYA-4574 / FGSC 10173)</name>
    <name type="common">Glume blotch fungus</name>
    <name type="synonym">Parastagonospora nodorum</name>
    <dbReference type="NCBI Taxonomy" id="321614"/>
    <lineage>
        <taxon>Eukaryota</taxon>
        <taxon>Fungi</taxon>
        <taxon>Dikarya</taxon>
        <taxon>Ascomycota</taxon>
        <taxon>Pezizomycotina</taxon>
        <taxon>Dothideomycetes</taxon>
        <taxon>Pleosporomycetidae</taxon>
        <taxon>Pleosporales</taxon>
        <taxon>Pleosporineae</taxon>
        <taxon>Phaeosphaeriaceae</taxon>
        <taxon>Parastagonospora</taxon>
    </lineage>
</organism>
<keyword id="KW-0489">Methyltransferase</keyword>
<keyword id="KW-0949">S-adenosyl-L-methionine</keyword>
<keyword id="KW-0808">Transferase</keyword>
<accession>P0CY36</accession>
<accession>Q0U8V8</accession>
<sequence>MTALDGIEGLSECIGRAIQEHLARSNLNLAWPQIDSLDRPILRFEAFIEDAGAVSTVASRSEKIASRTLDLTGMKTPQPSRSPTVTRNVATPHAEALHDRDDQESADDDDDDLQDDAAAQTASRKGTGGLRVANSQLIREDLSENQRQMQVDSRTFPKRRKVASEKFVFQPSTLDKLIIGIWEQAIFEQFQVAPNSVSSVVRHAPMDAAPVALSVTTEPSGGSFSQMNVFCRKVTQASRVCRSIEIIVQARWTELFEEQVQARTAAHPELSSTKHRKGVFMEACQDFGWSEKELRNKMAIWRGYKDVKDAAGWAALVFAGMGIYRFCKYRVGFDKEAMRRLKNLRNRLEVAADTLHPHWRQLLAIVGEPQALKYPGHPHEWVVYEDGSDPVPLRQTYIEHDPFFSFEHIEESVVDGSVWGCEDPRWMPQESAITRASGTYMCALCNEQQSDEPKLNACFCFPSLFGCVKRKPPPVQIYRTAEGKNNGLIALTAFERGTAVGELVGLITNGVRHLDVMEGSTPLAKYQIWQGREGNYTRFANHSCKANAQTSNFTWLDTQRVILVSKGIEAGSEITVDYGDKYWAGLDKSCLCGETCCRYKRDGRR</sequence>
<reference key="1">
    <citation type="journal article" date="2007" name="Plant Cell">
        <title>Dothideomycete-plant interactions illuminated by genome sequencing and EST analysis of the wheat pathogen Stagonospora nodorum.</title>
        <authorList>
            <person name="Hane J.K."/>
            <person name="Lowe R.G.T."/>
            <person name="Solomon P.S."/>
            <person name="Tan K.-C."/>
            <person name="Schoch C.L."/>
            <person name="Spatafora J.W."/>
            <person name="Crous P.W."/>
            <person name="Kodira C.D."/>
            <person name="Birren B.W."/>
            <person name="Galagan J.E."/>
            <person name="Torriani S.F.F."/>
            <person name="McDonald B.A."/>
            <person name="Oliver R.P."/>
        </authorList>
    </citation>
    <scope>NUCLEOTIDE SEQUENCE [LARGE SCALE GENOMIC DNA]</scope>
    <source>
        <strain>SN15 / ATCC MYA-4574 / FGSC 10173</strain>
    </source>
</reference>